<gene>
    <name evidence="1" type="primary">prsA</name>
    <name type="ordered locus">CLM_4030</name>
</gene>
<feature type="signal peptide" evidence="1">
    <location>
        <begin position="1"/>
        <end position="22"/>
    </location>
</feature>
<feature type="chain" id="PRO_1000164111" description="Foldase protein PrsA">
    <location>
        <begin position="23"/>
        <end position="336"/>
    </location>
</feature>
<feature type="domain" description="PpiC" evidence="1">
    <location>
        <begin position="194"/>
        <end position="286"/>
    </location>
</feature>
<feature type="lipid moiety-binding region" description="N-palmitoyl cysteine" evidence="1">
    <location>
        <position position="23"/>
    </location>
</feature>
<feature type="lipid moiety-binding region" description="S-diacylglycerol cysteine" evidence="1">
    <location>
        <position position="23"/>
    </location>
</feature>
<dbReference type="EC" id="5.2.1.8" evidence="1"/>
<dbReference type="EMBL" id="CP001581">
    <property type="protein sequence ID" value="ACO86103.1"/>
    <property type="molecule type" value="Genomic_DNA"/>
</dbReference>
<dbReference type="RefSeq" id="WP_003359443.1">
    <property type="nucleotide sequence ID" value="NC_012563.1"/>
</dbReference>
<dbReference type="SMR" id="C1FNE4"/>
<dbReference type="KEGG" id="cby:CLM_4030"/>
<dbReference type="eggNOG" id="COG0760">
    <property type="taxonomic scope" value="Bacteria"/>
</dbReference>
<dbReference type="HOGENOM" id="CLU_034646_5_2_9"/>
<dbReference type="Proteomes" id="UP000001374">
    <property type="component" value="Chromosome"/>
</dbReference>
<dbReference type="GO" id="GO:0005886">
    <property type="term" value="C:plasma membrane"/>
    <property type="evidence" value="ECO:0007669"/>
    <property type="project" value="UniProtKB-SubCell"/>
</dbReference>
<dbReference type="GO" id="GO:0003755">
    <property type="term" value="F:peptidyl-prolyl cis-trans isomerase activity"/>
    <property type="evidence" value="ECO:0007669"/>
    <property type="project" value="UniProtKB-UniRule"/>
</dbReference>
<dbReference type="GO" id="GO:0006457">
    <property type="term" value="P:protein folding"/>
    <property type="evidence" value="ECO:0007669"/>
    <property type="project" value="UniProtKB-UniRule"/>
</dbReference>
<dbReference type="Gene3D" id="3.10.50.40">
    <property type="match status" value="1"/>
</dbReference>
<dbReference type="Gene3D" id="1.10.4030.10">
    <property type="entry name" value="Porin chaperone SurA, peptide-binding domain"/>
    <property type="match status" value="1"/>
</dbReference>
<dbReference type="HAMAP" id="MF_01145">
    <property type="entry name" value="Foldase_PrsA"/>
    <property type="match status" value="1"/>
</dbReference>
<dbReference type="InterPro" id="IPR023059">
    <property type="entry name" value="Foldase_PrsA"/>
</dbReference>
<dbReference type="InterPro" id="IPR046357">
    <property type="entry name" value="PPIase_dom_sf"/>
</dbReference>
<dbReference type="InterPro" id="IPR000297">
    <property type="entry name" value="PPIase_PpiC"/>
</dbReference>
<dbReference type="InterPro" id="IPR023058">
    <property type="entry name" value="PPIase_PpiC_CS"/>
</dbReference>
<dbReference type="InterPro" id="IPR050245">
    <property type="entry name" value="PrsA_foldase"/>
</dbReference>
<dbReference type="InterPro" id="IPR027304">
    <property type="entry name" value="Trigger_fact/SurA_dom_sf"/>
</dbReference>
<dbReference type="NCBIfam" id="NF000809">
    <property type="entry name" value="PRK00059.1"/>
    <property type="match status" value="1"/>
</dbReference>
<dbReference type="PANTHER" id="PTHR47245:SF1">
    <property type="entry name" value="FOLDASE PROTEIN PRSA"/>
    <property type="match status" value="1"/>
</dbReference>
<dbReference type="PANTHER" id="PTHR47245">
    <property type="entry name" value="PEPTIDYLPROLYL ISOMERASE"/>
    <property type="match status" value="1"/>
</dbReference>
<dbReference type="Pfam" id="PF13145">
    <property type="entry name" value="Rotamase_2"/>
    <property type="match status" value="1"/>
</dbReference>
<dbReference type="Pfam" id="PF13624">
    <property type="entry name" value="SurA_N_3"/>
    <property type="match status" value="1"/>
</dbReference>
<dbReference type="SUPFAM" id="SSF54534">
    <property type="entry name" value="FKBP-like"/>
    <property type="match status" value="1"/>
</dbReference>
<dbReference type="SUPFAM" id="SSF109998">
    <property type="entry name" value="Triger factor/SurA peptide-binding domain-like"/>
    <property type="match status" value="1"/>
</dbReference>
<dbReference type="PROSITE" id="PS01096">
    <property type="entry name" value="PPIC_PPIASE_1"/>
    <property type="match status" value="1"/>
</dbReference>
<dbReference type="PROSITE" id="PS50198">
    <property type="entry name" value="PPIC_PPIASE_2"/>
    <property type="match status" value="1"/>
</dbReference>
<dbReference type="PROSITE" id="PS51257">
    <property type="entry name" value="PROKAR_LIPOPROTEIN"/>
    <property type="match status" value="1"/>
</dbReference>
<accession>C1FNE4</accession>
<organism>
    <name type="scientific">Clostridium botulinum (strain Kyoto / Type A2)</name>
    <dbReference type="NCBI Taxonomy" id="536232"/>
    <lineage>
        <taxon>Bacteria</taxon>
        <taxon>Bacillati</taxon>
        <taxon>Bacillota</taxon>
        <taxon>Clostridia</taxon>
        <taxon>Eubacteriales</taxon>
        <taxon>Clostridiaceae</taxon>
        <taxon>Clostridium</taxon>
    </lineage>
</organism>
<evidence type="ECO:0000255" key="1">
    <source>
        <dbReference type="HAMAP-Rule" id="MF_01145"/>
    </source>
</evidence>
<reference key="1">
    <citation type="submission" date="2008-10" db="EMBL/GenBank/DDBJ databases">
        <title>Genome sequence of Clostridium botulinum A2 Kyoto.</title>
        <authorList>
            <person name="Shrivastava S."/>
            <person name="Brinkac L.M."/>
            <person name="Brown J.L."/>
            <person name="Bruce D."/>
            <person name="Detter C.C."/>
            <person name="Johnson E.A."/>
            <person name="Munk C.A."/>
            <person name="Smith L.A."/>
            <person name="Smith T.J."/>
            <person name="Sutton G."/>
            <person name="Brettin T.S."/>
        </authorList>
    </citation>
    <scope>NUCLEOTIDE SEQUENCE [LARGE SCALE GENOMIC DNA]</scope>
    <source>
        <strain>Kyoto / Type A2</strain>
    </source>
</reference>
<keyword id="KW-1003">Cell membrane</keyword>
<keyword id="KW-0413">Isomerase</keyword>
<keyword id="KW-0449">Lipoprotein</keyword>
<keyword id="KW-0472">Membrane</keyword>
<keyword id="KW-0564">Palmitate</keyword>
<keyword id="KW-0697">Rotamase</keyword>
<keyword id="KW-0732">Signal</keyword>
<protein>
    <recommendedName>
        <fullName evidence="1">Foldase protein PrsA</fullName>
        <ecNumber evidence="1">5.2.1.8</ecNumber>
    </recommendedName>
</protein>
<comment type="function">
    <text evidence="1">Plays a major role in protein secretion by helping the post-translocational extracellular folding of several secreted proteins.</text>
</comment>
<comment type="catalytic activity">
    <reaction evidence="1">
        <text>[protein]-peptidylproline (omega=180) = [protein]-peptidylproline (omega=0)</text>
        <dbReference type="Rhea" id="RHEA:16237"/>
        <dbReference type="Rhea" id="RHEA-COMP:10747"/>
        <dbReference type="Rhea" id="RHEA-COMP:10748"/>
        <dbReference type="ChEBI" id="CHEBI:83833"/>
        <dbReference type="ChEBI" id="CHEBI:83834"/>
        <dbReference type="EC" id="5.2.1.8"/>
    </reaction>
</comment>
<comment type="subcellular location">
    <subcellularLocation>
        <location evidence="1">Cell membrane</location>
        <topology evidence="1">Lipid-anchor</topology>
    </subcellularLocation>
</comment>
<comment type="similarity">
    <text evidence="1">Belongs to the PrsA family.</text>
</comment>
<sequence>MKSAKKLLSVLCLGIFILTFTACDMVEKTPEAKAKSTIAKVNGEKIQRKDLDESPSMQQVLSQIKTQYGEEFEKTEQGKEVIKEQKKQILENLITEKVLLQKGKELKVIPKDEELNKEADKKVNEIKAVYNNDEKKFEETLKSTGFTKETLKEYLKDQIVIEKVINEVTKDVKVEDKDAQKYYNENQSMFTEKPNTMNVSHILVKTEDEAKKVKKRLDAKEDFAKVAKEVSQDTGSKDKGGLLGDISYSDSNFDPTFMKAAIALKSGAISNPVHTQFGYHIIKINSKKEYPVKKFDSVKEDIKKQLKQEKQQEAYTKKIEEWKKASKIKTYEKNLL</sequence>
<proteinExistence type="inferred from homology"/>
<name>PRSA_CLOBJ</name>